<feature type="initiator methionine" description="Removed" evidence="1">
    <location>
        <position position="1"/>
    </location>
</feature>
<feature type="chain" id="PRO_0000339993" description="Photosystem II protein D1" evidence="1">
    <location>
        <begin position="2"/>
        <end position="344"/>
    </location>
</feature>
<feature type="propeptide" id="PRO_0000339994" evidence="1">
    <location>
        <begin position="345"/>
        <end position="353"/>
    </location>
</feature>
<feature type="transmembrane region" description="Helical" evidence="1">
    <location>
        <begin position="29"/>
        <end position="46"/>
    </location>
</feature>
<feature type="transmembrane region" description="Helical" evidence="1">
    <location>
        <begin position="118"/>
        <end position="133"/>
    </location>
</feature>
<feature type="transmembrane region" description="Helical" evidence="1">
    <location>
        <begin position="142"/>
        <end position="156"/>
    </location>
</feature>
<feature type="transmembrane region" description="Helical" evidence="1">
    <location>
        <begin position="197"/>
        <end position="218"/>
    </location>
</feature>
<feature type="transmembrane region" description="Helical" evidence="1">
    <location>
        <begin position="274"/>
        <end position="288"/>
    </location>
</feature>
<feature type="binding site" description="axial binding residue" evidence="1">
    <location>
        <position position="118"/>
    </location>
    <ligand>
        <name>chlorophyll a</name>
        <dbReference type="ChEBI" id="CHEBI:58416"/>
        <label>ChlzD1</label>
    </ligand>
    <ligandPart>
        <name>Mg</name>
        <dbReference type="ChEBI" id="CHEBI:25107"/>
    </ligandPart>
</feature>
<feature type="binding site" evidence="1">
    <location>
        <position position="126"/>
    </location>
    <ligand>
        <name>pheophytin a</name>
        <dbReference type="ChEBI" id="CHEBI:136840"/>
        <label>D1</label>
    </ligand>
</feature>
<feature type="binding site" evidence="1">
    <location>
        <position position="170"/>
    </location>
    <ligand>
        <name>[CaMn4O5] cluster</name>
        <dbReference type="ChEBI" id="CHEBI:189552"/>
    </ligand>
</feature>
<feature type="binding site" evidence="1">
    <location>
        <position position="189"/>
    </location>
    <ligand>
        <name>[CaMn4O5] cluster</name>
        <dbReference type="ChEBI" id="CHEBI:189552"/>
    </ligand>
</feature>
<feature type="binding site" description="axial binding residue" evidence="1">
    <location>
        <position position="198"/>
    </location>
    <ligand>
        <name>chlorophyll a</name>
        <dbReference type="ChEBI" id="CHEBI:58416"/>
        <label>PD1</label>
    </ligand>
    <ligandPart>
        <name>Mg</name>
        <dbReference type="ChEBI" id="CHEBI:25107"/>
    </ligandPart>
</feature>
<feature type="binding site" evidence="1">
    <location>
        <position position="215"/>
    </location>
    <ligand>
        <name>a quinone</name>
        <dbReference type="ChEBI" id="CHEBI:132124"/>
        <label>B</label>
    </ligand>
</feature>
<feature type="binding site" evidence="1">
    <location>
        <position position="215"/>
    </location>
    <ligand>
        <name>Fe cation</name>
        <dbReference type="ChEBI" id="CHEBI:24875"/>
        <note>ligand shared with heterodimeric partner</note>
    </ligand>
</feature>
<feature type="binding site" evidence="1">
    <location>
        <begin position="264"/>
        <end position="265"/>
    </location>
    <ligand>
        <name>a quinone</name>
        <dbReference type="ChEBI" id="CHEBI:132124"/>
        <label>B</label>
    </ligand>
</feature>
<feature type="binding site" evidence="1">
    <location>
        <position position="272"/>
    </location>
    <ligand>
        <name>Fe cation</name>
        <dbReference type="ChEBI" id="CHEBI:24875"/>
        <note>ligand shared with heterodimeric partner</note>
    </ligand>
</feature>
<feature type="binding site" evidence="1">
    <location>
        <position position="332"/>
    </location>
    <ligand>
        <name>[CaMn4O5] cluster</name>
        <dbReference type="ChEBI" id="CHEBI:189552"/>
    </ligand>
</feature>
<feature type="binding site" evidence="1">
    <location>
        <position position="333"/>
    </location>
    <ligand>
        <name>[CaMn4O5] cluster</name>
        <dbReference type="ChEBI" id="CHEBI:189552"/>
    </ligand>
</feature>
<feature type="binding site" evidence="1">
    <location>
        <position position="342"/>
    </location>
    <ligand>
        <name>[CaMn4O5] cluster</name>
        <dbReference type="ChEBI" id="CHEBI:189552"/>
    </ligand>
</feature>
<feature type="binding site" evidence="1">
    <location>
        <position position="344"/>
    </location>
    <ligand>
        <name>[CaMn4O5] cluster</name>
        <dbReference type="ChEBI" id="CHEBI:189552"/>
    </ligand>
</feature>
<feature type="site" description="Tyrosine radical intermediate" evidence="1">
    <location>
        <position position="161"/>
    </location>
</feature>
<feature type="site" description="Stabilizes free radical intermediate" evidence="1">
    <location>
        <position position="190"/>
    </location>
</feature>
<feature type="site" description="Cleavage; by CTPA" evidence="1">
    <location>
        <begin position="344"/>
        <end position="345"/>
    </location>
</feature>
<feature type="modified residue" description="N-acetylthreonine" evidence="1">
    <location>
        <position position="2"/>
    </location>
</feature>
<feature type="modified residue" description="Phosphothreonine" evidence="1">
    <location>
        <position position="2"/>
    </location>
</feature>
<protein>
    <recommendedName>
        <fullName evidence="1">Photosystem II protein D1</fullName>
        <shortName evidence="1">PSII D1 protein</shortName>
        <ecNumber evidence="1">1.10.3.9</ecNumber>
    </recommendedName>
    <alternativeName>
        <fullName evidence="1">Photosystem II Q(B) protein</fullName>
    </alternativeName>
</protein>
<accession>Q49L18</accession>
<dbReference type="EC" id="1.10.3.9" evidence="1"/>
<dbReference type="EMBL" id="AY780259">
    <property type="protein sequence ID" value="AAX21009.1"/>
    <property type="molecule type" value="Genomic_DNA"/>
</dbReference>
<dbReference type="RefSeq" id="YP_636279.1">
    <property type="nucleotide sequence ID" value="NC_008115.1"/>
</dbReference>
<dbReference type="SMR" id="Q49L18"/>
<dbReference type="GeneID" id="4108397"/>
<dbReference type="GO" id="GO:0009535">
    <property type="term" value="C:chloroplast thylakoid membrane"/>
    <property type="evidence" value="ECO:0007669"/>
    <property type="project" value="UniProtKB-SubCell"/>
</dbReference>
<dbReference type="GO" id="GO:0009523">
    <property type="term" value="C:photosystem II"/>
    <property type="evidence" value="ECO:0007669"/>
    <property type="project" value="UniProtKB-KW"/>
</dbReference>
<dbReference type="GO" id="GO:0016168">
    <property type="term" value="F:chlorophyll binding"/>
    <property type="evidence" value="ECO:0007669"/>
    <property type="project" value="UniProtKB-UniRule"/>
</dbReference>
<dbReference type="GO" id="GO:0045156">
    <property type="term" value="F:electron transporter, transferring electrons within the cyclic electron transport pathway of photosynthesis activity"/>
    <property type="evidence" value="ECO:0007669"/>
    <property type="project" value="InterPro"/>
</dbReference>
<dbReference type="GO" id="GO:0005506">
    <property type="term" value="F:iron ion binding"/>
    <property type="evidence" value="ECO:0007669"/>
    <property type="project" value="UniProtKB-UniRule"/>
</dbReference>
<dbReference type="GO" id="GO:0016682">
    <property type="term" value="F:oxidoreductase activity, acting on diphenols and related substances as donors, oxygen as acceptor"/>
    <property type="evidence" value="ECO:0007669"/>
    <property type="project" value="UniProtKB-UniRule"/>
</dbReference>
<dbReference type="GO" id="GO:0010242">
    <property type="term" value="F:oxygen evolving activity"/>
    <property type="evidence" value="ECO:0007669"/>
    <property type="project" value="UniProtKB-EC"/>
</dbReference>
<dbReference type="GO" id="GO:0009772">
    <property type="term" value="P:photosynthetic electron transport in photosystem II"/>
    <property type="evidence" value="ECO:0007669"/>
    <property type="project" value="InterPro"/>
</dbReference>
<dbReference type="GO" id="GO:0009635">
    <property type="term" value="P:response to herbicide"/>
    <property type="evidence" value="ECO:0007669"/>
    <property type="project" value="UniProtKB-KW"/>
</dbReference>
<dbReference type="CDD" id="cd09289">
    <property type="entry name" value="Photosystem-II_D1"/>
    <property type="match status" value="1"/>
</dbReference>
<dbReference type="FunFam" id="1.20.85.10:FF:000002">
    <property type="entry name" value="Photosystem II protein D1"/>
    <property type="match status" value="1"/>
</dbReference>
<dbReference type="Gene3D" id="1.20.85.10">
    <property type="entry name" value="Photosystem II protein D1-like"/>
    <property type="match status" value="1"/>
</dbReference>
<dbReference type="HAMAP" id="MF_01379">
    <property type="entry name" value="PSII_PsbA_D1"/>
    <property type="match status" value="1"/>
</dbReference>
<dbReference type="InterPro" id="IPR055266">
    <property type="entry name" value="D1/D2"/>
</dbReference>
<dbReference type="InterPro" id="IPR036854">
    <property type="entry name" value="Photo_II_D1/D2_sf"/>
</dbReference>
<dbReference type="InterPro" id="IPR000484">
    <property type="entry name" value="Photo_RC_L/M"/>
</dbReference>
<dbReference type="InterPro" id="IPR055265">
    <property type="entry name" value="Photo_RC_L/M_CS"/>
</dbReference>
<dbReference type="InterPro" id="IPR005867">
    <property type="entry name" value="PSII_D1"/>
</dbReference>
<dbReference type="NCBIfam" id="TIGR01151">
    <property type="entry name" value="psbA"/>
    <property type="match status" value="1"/>
</dbReference>
<dbReference type="PANTHER" id="PTHR33149:SF12">
    <property type="entry name" value="PHOTOSYSTEM II D2 PROTEIN"/>
    <property type="match status" value="1"/>
</dbReference>
<dbReference type="PANTHER" id="PTHR33149">
    <property type="entry name" value="PHOTOSYSTEM II PROTEIN D1"/>
    <property type="match status" value="1"/>
</dbReference>
<dbReference type="Pfam" id="PF00124">
    <property type="entry name" value="Photo_RC"/>
    <property type="match status" value="1"/>
</dbReference>
<dbReference type="PRINTS" id="PR00256">
    <property type="entry name" value="REACTNCENTRE"/>
</dbReference>
<dbReference type="SUPFAM" id="SSF81483">
    <property type="entry name" value="Bacterial photosystem II reaction centre, L and M subunits"/>
    <property type="match status" value="1"/>
</dbReference>
<dbReference type="PROSITE" id="PS00244">
    <property type="entry name" value="REACTION_CENTER"/>
    <property type="match status" value="1"/>
</dbReference>
<organism>
    <name type="scientific">Eucalyptus globulus subsp. globulus</name>
    <name type="common">Tasmanian blue gum</name>
    <dbReference type="NCBI Taxonomy" id="71271"/>
    <lineage>
        <taxon>Eukaryota</taxon>
        <taxon>Viridiplantae</taxon>
        <taxon>Streptophyta</taxon>
        <taxon>Embryophyta</taxon>
        <taxon>Tracheophyta</taxon>
        <taxon>Spermatophyta</taxon>
        <taxon>Magnoliopsida</taxon>
        <taxon>eudicotyledons</taxon>
        <taxon>Gunneridae</taxon>
        <taxon>Pentapetalae</taxon>
        <taxon>rosids</taxon>
        <taxon>malvids</taxon>
        <taxon>Myrtales</taxon>
        <taxon>Myrtaceae</taxon>
        <taxon>Myrtoideae</taxon>
        <taxon>Eucalypteae</taxon>
        <taxon>Eucalyptus</taxon>
    </lineage>
</organism>
<geneLocation type="chloroplast"/>
<evidence type="ECO:0000255" key="1">
    <source>
        <dbReference type="HAMAP-Rule" id="MF_01379"/>
    </source>
</evidence>
<sequence length="353" mass="38965">MTAILERRESESLWGRFCNWITSTENRLYIGWFGVLMIPTLLTATSVFIIAFIAAPPVDIDGIREPVSGSLLYGNNIISGAIIPTSAAIGLHFYPIWEAASVDEWLYNGGPYELIVLHFLLGVACYMGREWELSFRLGMRPWIAVAYSAPVAAATAVFLIYPIGQGSFSDGMPLGISGTFNFMIVFQAEHNILMHPFHMLGVAGVFGGSLFSAMHGSLVTSSLIRETTENESANEGYRFGQEEETYNIVAAHGYFGRLIFQYASFNNSRSLHFFLAAWPVVGIWFTALGISTMAFNLNGFNFNQSVVDSQGRVINTWADIINRANLGMEVMHERNAHNFPLDLAAVEVPSTNG</sequence>
<gene>
    <name evidence="1" type="primary">psbA</name>
</gene>
<name>PSBA_EUCGG</name>
<comment type="function">
    <text evidence="1">Photosystem II (PSII) is a light-driven water:plastoquinone oxidoreductase that uses light energy to abstract electrons from H(2)O, generating O(2) and a proton gradient subsequently used for ATP formation. It consists of a core antenna complex that captures photons, and an electron transfer chain that converts photonic excitation into a charge separation. The D1/D2 (PsbA/PsbD) reaction center heterodimer binds P680, the primary electron donor of PSII as well as several subsequent electron acceptors.</text>
</comment>
<comment type="catalytic activity">
    <reaction evidence="1">
        <text>2 a plastoquinone + 4 hnu + 2 H2O = 2 a plastoquinol + O2</text>
        <dbReference type="Rhea" id="RHEA:36359"/>
        <dbReference type="Rhea" id="RHEA-COMP:9561"/>
        <dbReference type="Rhea" id="RHEA-COMP:9562"/>
        <dbReference type="ChEBI" id="CHEBI:15377"/>
        <dbReference type="ChEBI" id="CHEBI:15379"/>
        <dbReference type="ChEBI" id="CHEBI:17757"/>
        <dbReference type="ChEBI" id="CHEBI:30212"/>
        <dbReference type="ChEBI" id="CHEBI:62192"/>
        <dbReference type="EC" id="1.10.3.9"/>
    </reaction>
</comment>
<comment type="cofactor">
    <text evidence="1">The D1/D2 heterodimer binds P680, chlorophylls that are the primary electron donor of PSII, and subsequent electron acceptors. It shares a non-heme iron and each subunit binds pheophytin, quinone, additional chlorophylls, carotenoids and lipids. D1 provides most of the ligands for the Mn4-Ca-O5 cluster of the oxygen-evolving complex (OEC). There is also a Cl(-1) ion associated with D1 and D2, which is required for oxygen evolution. The PSII complex binds additional chlorophylls, carotenoids and specific lipids.</text>
</comment>
<comment type="subunit">
    <text evidence="1">PSII is composed of 1 copy each of membrane proteins PsbA, PsbB, PsbC, PsbD, PsbE, PsbF, PsbH, PsbI, PsbJ, PsbK, PsbL, PsbM, PsbT, PsbX, PsbY, PsbZ, Psb30/Ycf12, at least 3 peripheral proteins of the oxygen-evolving complex and a large number of cofactors. It forms dimeric complexes.</text>
</comment>
<comment type="subcellular location">
    <subcellularLocation>
        <location evidence="1">Plastid</location>
        <location evidence="1">Chloroplast thylakoid membrane</location>
        <topology evidence="1">Multi-pass membrane protein</topology>
    </subcellularLocation>
</comment>
<comment type="PTM">
    <text evidence="1">Tyr-161 forms a radical intermediate that is referred to as redox-active TyrZ, YZ or Y-Z.</text>
</comment>
<comment type="PTM">
    <text evidence="1">C-terminally processed by CTPA; processing is essential to allow assembly of the oxygen-evolving complex and thus photosynthetic growth.</text>
</comment>
<comment type="miscellaneous">
    <text evidence="1">2 of the reaction center chlorophylls (ChlD1 and ChlD2) are entirely coordinated by water.</text>
</comment>
<comment type="miscellaneous">
    <text evidence="1">Herbicides such as atrazine, BNT, diuron or ioxynil bind in the Q(B) binding site and block subsequent electron transfer.</text>
</comment>
<comment type="similarity">
    <text evidence="1">Belongs to the reaction center PufL/M/PsbA/D family.</text>
</comment>
<reference key="1">
    <citation type="journal article" date="2005" name="DNA Res.">
        <title>Complete nucleotide sequence of the chloroplast genome from the Tasmanian blue gum, Eucalyptus globulus (Myrtaceae).</title>
        <authorList>
            <person name="Steane D.A."/>
        </authorList>
    </citation>
    <scope>NUCLEOTIDE SEQUENCE [LARGE SCALE GENOMIC DNA]</scope>
</reference>
<keyword id="KW-0007">Acetylation</keyword>
<keyword id="KW-0106">Calcium</keyword>
<keyword id="KW-0148">Chlorophyll</keyword>
<keyword id="KW-0150">Chloroplast</keyword>
<keyword id="KW-0157">Chromophore</keyword>
<keyword id="KW-0249">Electron transport</keyword>
<keyword id="KW-0359">Herbicide resistance</keyword>
<keyword id="KW-0408">Iron</keyword>
<keyword id="KW-0460">Magnesium</keyword>
<keyword id="KW-0464">Manganese</keyword>
<keyword id="KW-0472">Membrane</keyword>
<keyword id="KW-0479">Metal-binding</keyword>
<keyword id="KW-0560">Oxidoreductase</keyword>
<keyword id="KW-0597">Phosphoprotein</keyword>
<keyword id="KW-0602">Photosynthesis</keyword>
<keyword id="KW-0604">Photosystem II</keyword>
<keyword id="KW-0934">Plastid</keyword>
<keyword id="KW-0793">Thylakoid</keyword>
<keyword id="KW-0812">Transmembrane</keyword>
<keyword id="KW-1133">Transmembrane helix</keyword>
<keyword id="KW-0813">Transport</keyword>
<proteinExistence type="inferred from homology"/>